<evidence type="ECO:0000255" key="1">
    <source>
        <dbReference type="PROSITE-ProRule" id="PRU00145"/>
    </source>
</evidence>
<evidence type="ECO:0000269" key="2">
    <source>
    </source>
</evidence>
<name>PKHJ1_HUMAN</name>
<protein>
    <recommendedName>
        <fullName>Pleckstrin homology domain-containing family J member 1</fullName>
        <shortName>PH domain-containing family J member 1</shortName>
    </recommendedName>
    <alternativeName>
        <fullName>Guanine nucleotide-releasing protein x</fullName>
    </alternativeName>
</protein>
<sequence length="149" mass="17551">MRYNEKELQALSRQPAEMAAELGMRGPKKGSVLKRRLVKLVVNFLFYFRTDEAEPVGALLLERCRVVREEPGTFSISFIEDPERKYHFECSSEEQCQEWMEALRRASYEFMRRSLIFYRNEIRKVTGKDPLEQFGISEEARFQLSGLQA</sequence>
<proteinExistence type="evidence at protein level"/>
<keyword id="KW-1267">Proteomics identification</keyword>
<keyword id="KW-1185">Reference proteome</keyword>
<gene>
    <name type="primary">PLEKHJ1</name>
    <name type="synonym">GNRPX</name>
</gene>
<reference key="1">
    <citation type="journal article" date="2004" name="Nat. Genet.">
        <title>Complete sequencing and characterization of 21,243 full-length human cDNAs.</title>
        <authorList>
            <person name="Ota T."/>
            <person name="Suzuki Y."/>
            <person name="Nishikawa T."/>
            <person name="Otsuki T."/>
            <person name="Sugiyama T."/>
            <person name="Irie R."/>
            <person name="Wakamatsu A."/>
            <person name="Hayashi K."/>
            <person name="Sato H."/>
            <person name="Nagai K."/>
            <person name="Kimura K."/>
            <person name="Makita H."/>
            <person name="Sekine M."/>
            <person name="Obayashi M."/>
            <person name="Nishi T."/>
            <person name="Shibahara T."/>
            <person name="Tanaka T."/>
            <person name="Ishii S."/>
            <person name="Yamamoto J."/>
            <person name="Saito K."/>
            <person name="Kawai Y."/>
            <person name="Isono Y."/>
            <person name="Nakamura Y."/>
            <person name="Nagahari K."/>
            <person name="Murakami K."/>
            <person name="Yasuda T."/>
            <person name="Iwayanagi T."/>
            <person name="Wagatsuma M."/>
            <person name="Shiratori A."/>
            <person name="Sudo H."/>
            <person name="Hosoiri T."/>
            <person name="Kaku Y."/>
            <person name="Kodaira H."/>
            <person name="Kondo H."/>
            <person name="Sugawara M."/>
            <person name="Takahashi M."/>
            <person name="Kanda K."/>
            <person name="Yokoi T."/>
            <person name="Furuya T."/>
            <person name="Kikkawa E."/>
            <person name="Omura Y."/>
            <person name="Abe K."/>
            <person name="Kamihara K."/>
            <person name="Katsuta N."/>
            <person name="Sato K."/>
            <person name="Tanikawa M."/>
            <person name="Yamazaki M."/>
            <person name="Ninomiya K."/>
            <person name="Ishibashi T."/>
            <person name="Yamashita H."/>
            <person name="Murakawa K."/>
            <person name="Fujimori K."/>
            <person name="Tanai H."/>
            <person name="Kimata M."/>
            <person name="Watanabe M."/>
            <person name="Hiraoka S."/>
            <person name="Chiba Y."/>
            <person name="Ishida S."/>
            <person name="Ono Y."/>
            <person name="Takiguchi S."/>
            <person name="Watanabe S."/>
            <person name="Yosida M."/>
            <person name="Hotuta T."/>
            <person name="Kusano J."/>
            <person name="Kanehori K."/>
            <person name="Takahashi-Fujii A."/>
            <person name="Hara H."/>
            <person name="Tanase T.-O."/>
            <person name="Nomura Y."/>
            <person name="Togiya S."/>
            <person name="Komai F."/>
            <person name="Hara R."/>
            <person name="Takeuchi K."/>
            <person name="Arita M."/>
            <person name="Imose N."/>
            <person name="Musashino K."/>
            <person name="Yuuki H."/>
            <person name="Oshima A."/>
            <person name="Sasaki N."/>
            <person name="Aotsuka S."/>
            <person name="Yoshikawa Y."/>
            <person name="Matsunawa H."/>
            <person name="Ichihara T."/>
            <person name="Shiohata N."/>
            <person name="Sano S."/>
            <person name="Moriya S."/>
            <person name="Momiyama H."/>
            <person name="Satoh N."/>
            <person name="Takami S."/>
            <person name="Terashima Y."/>
            <person name="Suzuki O."/>
            <person name="Nakagawa S."/>
            <person name="Senoh A."/>
            <person name="Mizoguchi H."/>
            <person name="Goto Y."/>
            <person name="Shimizu F."/>
            <person name="Wakebe H."/>
            <person name="Hishigaki H."/>
            <person name="Watanabe T."/>
            <person name="Sugiyama A."/>
            <person name="Takemoto M."/>
            <person name="Kawakami B."/>
            <person name="Yamazaki M."/>
            <person name="Watanabe K."/>
            <person name="Kumagai A."/>
            <person name="Itakura S."/>
            <person name="Fukuzumi Y."/>
            <person name="Fujimori Y."/>
            <person name="Komiyama M."/>
            <person name="Tashiro H."/>
            <person name="Tanigami A."/>
            <person name="Fujiwara T."/>
            <person name="Ono T."/>
            <person name="Yamada K."/>
            <person name="Fujii Y."/>
            <person name="Ozaki K."/>
            <person name="Hirao M."/>
            <person name="Ohmori Y."/>
            <person name="Kawabata A."/>
            <person name="Hikiji T."/>
            <person name="Kobatake N."/>
            <person name="Inagaki H."/>
            <person name="Ikema Y."/>
            <person name="Okamoto S."/>
            <person name="Okitani R."/>
            <person name="Kawakami T."/>
            <person name="Noguchi S."/>
            <person name="Itoh T."/>
            <person name="Shigeta K."/>
            <person name="Senba T."/>
            <person name="Matsumura K."/>
            <person name="Nakajima Y."/>
            <person name="Mizuno T."/>
            <person name="Morinaga M."/>
            <person name="Sasaki M."/>
            <person name="Togashi T."/>
            <person name="Oyama M."/>
            <person name="Hata H."/>
            <person name="Watanabe M."/>
            <person name="Komatsu T."/>
            <person name="Mizushima-Sugano J."/>
            <person name="Satoh T."/>
            <person name="Shirai Y."/>
            <person name="Takahashi Y."/>
            <person name="Nakagawa K."/>
            <person name="Okumura K."/>
            <person name="Nagase T."/>
            <person name="Nomura N."/>
            <person name="Kikuchi H."/>
            <person name="Masuho Y."/>
            <person name="Yamashita R."/>
            <person name="Nakai K."/>
            <person name="Yada T."/>
            <person name="Nakamura Y."/>
            <person name="Ohara O."/>
            <person name="Isogai T."/>
            <person name="Sugano S."/>
        </authorList>
    </citation>
    <scope>NUCLEOTIDE SEQUENCE [LARGE SCALE MRNA]</scope>
    <source>
        <tissue>Testis</tissue>
    </source>
</reference>
<reference key="2">
    <citation type="submission" date="2004-06" db="EMBL/GenBank/DDBJ databases">
        <title>Cloning of human full open reading frames in Gateway(TM) system entry vector (pDONR201).</title>
        <authorList>
            <person name="Ebert L."/>
            <person name="Schick M."/>
            <person name="Neubert P."/>
            <person name="Schatten R."/>
            <person name="Henze S."/>
            <person name="Korn B."/>
        </authorList>
    </citation>
    <scope>NUCLEOTIDE SEQUENCE [LARGE SCALE MRNA]</scope>
</reference>
<reference key="3">
    <citation type="submission" date="2005-09" db="EMBL/GenBank/DDBJ databases">
        <authorList>
            <person name="Mural R.J."/>
            <person name="Istrail S."/>
            <person name="Sutton G.G."/>
            <person name="Florea L."/>
            <person name="Halpern A.L."/>
            <person name="Mobarry C.M."/>
            <person name="Lippert R."/>
            <person name="Walenz B."/>
            <person name="Shatkay H."/>
            <person name="Dew I."/>
            <person name="Miller J.R."/>
            <person name="Flanigan M.J."/>
            <person name="Edwards N.J."/>
            <person name="Bolanos R."/>
            <person name="Fasulo D."/>
            <person name="Halldorsson B.V."/>
            <person name="Hannenhalli S."/>
            <person name="Turner R."/>
            <person name="Yooseph S."/>
            <person name="Lu F."/>
            <person name="Nusskern D.R."/>
            <person name="Shue B.C."/>
            <person name="Zheng X.H."/>
            <person name="Zhong F."/>
            <person name="Delcher A.L."/>
            <person name="Huson D.H."/>
            <person name="Kravitz S.A."/>
            <person name="Mouchard L."/>
            <person name="Reinert K."/>
            <person name="Remington K.A."/>
            <person name="Clark A.G."/>
            <person name="Waterman M.S."/>
            <person name="Eichler E.E."/>
            <person name="Adams M.D."/>
            <person name="Hunkapiller M.W."/>
            <person name="Myers E.W."/>
            <person name="Venter J.C."/>
        </authorList>
    </citation>
    <scope>NUCLEOTIDE SEQUENCE [LARGE SCALE GENOMIC DNA]</scope>
</reference>
<reference key="4">
    <citation type="journal article" date="2004" name="Genome Res.">
        <title>The status, quality, and expansion of the NIH full-length cDNA project: the Mammalian Gene Collection (MGC).</title>
        <authorList>
            <consortium name="The MGC Project Team"/>
        </authorList>
    </citation>
    <scope>NUCLEOTIDE SEQUENCE [LARGE SCALE MRNA]</scope>
    <source>
        <tissue>Muscle</tissue>
    </source>
</reference>
<reference key="5">
    <citation type="journal article" date="2001" name="Gene">
        <title>An expressed GNRP-like gene shares a bi-directional promoter with SF3A2 (SAP62) immediately upstream of AMH.</title>
        <authorList>
            <person name="Dresser D.W."/>
            <person name="Jamin S.P."/>
            <person name="Atkins C.J."/>
            <person name="Guerrier D."/>
        </authorList>
    </citation>
    <scope>TISSUE SPECIFICITY</scope>
</reference>
<organism>
    <name type="scientific">Homo sapiens</name>
    <name type="common">Human</name>
    <dbReference type="NCBI Taxonomy" id="9606"/>
    <lineage>
        <taxon>Eukaryota</taxon>
        <taxon>Metazoa</taxon>
        <taxon>Chordata</taxon>
        <taxon>Craniata</taxon>
        <taxon>Vertebrata</taxon>
        <taxon>Euteleostomi</taxon>
        <taxon>Mammalia</taxon>
        <taxon>Eutheria</taxon>
        <taxon>Euarchontoglires</taxon>
        <taxon>Primates</taxon>
        <taxon>Haplorrhini</taxon>
        <taxon>Catarrhini</taxon>
        <taxon>Hominidae</taxon>
        <taxon>Homo</taxon>
    </lineage>
</organism>
<dbReference type="EMBL" id="AK001159">
    <property type="protein sequence ID" value="BAA91525.1"/>
    <property type="molecule type" value="mRNA"/>
</dbReference>
<dbReference type="EMBL" id="AK097723">
    <property type="protein sequence ID" value="BAG53521.1"/>
    <property type="molecule type" value="mRNA"/>
</dbReference>
<dbReference type="EMBL" id="CR457253">
    <property type="protein sequence ID" value="CAG33534.1"/>
    <property type="molecule type" value="mRNA"/>
</dbReference>
<dbReference type="EMBL" id="CH471139">
    <property type="protein sequence ID" value="EAW69405.1"/>
    <property type="molecule type" value="Genomic_DNA"/>
</dbReference>
<dbReference type="EMBL" id="CH471139">
    <property type="protein sequence ID" value="EAW69406.1"/>
    <property type="molecule type" value="Genomic_DNA"/>
</dbReference>
<dbReference type="EMBL" id="BC003084">
    <property type="protein sequence ID" value="AAH03084.1"/>
    <property type="molecule type" value="mRNA"/>
</dbReference>
<dbReference type="EMBL" id="BC008966">
    <property type="protein sequence ID" value="AAH08966.1"/>
    <property type="molecule type" value="mRNA"/>
</dbReference>
<dbReference type="CCDS" id="CCDS12083.1"/>
<dbReference type="RefSeq" id="NP_060519.1">
    <property type="nucleotide sequence ID" value="NM_018049.3"/>
</dbReference>
<dbReference type="SMR" id="Q9NW61"/>
<dbReference type="BioGRID" id="120421">
    <property type="interactions" value="31"/>
</dbReference>
<dbReference type="FunCoup" id="Q9NW61">
    <property type="interactions" value="647"/>
</dbReference>
<dbReference type="IntAct" id="Q9NW61">
    <property type="interactions" value="26"/>
</dbReference>
<dbReference type="MINT" id="Q9NW61"/>
<dbReference type="STRING" id="9606.ENSP00000464955"/>
<dbReference type="iPTMnet" id="Q9NW61"/>
<dbReference type="PhosphoSitePlus" id="Q9NW61"/>
<dbReference type="BioMuta" id="PLEKHJ1"/>
<dbReference type="DMDM" id="74753007"/>
<dbReference type="jPOST" id="Q9NW61"/>
<dbReference type="MassIVE" id="Q9NW61"/>
<dbReference type="PaxDb" id="9606-ENSP00000464955"/>
<dbReference type="PeptideAtlas" id="Q9NW61"/>
<dbReference type="ProteomicsDB" id="82896"/>
<dbReference type="Pumba" id="Q9NW61"/>
<dbReference type="Antibodypedia" id="22945">
    <property type="antibodies" value="133 antibodies from 25 providers"/>
</dbReference>
<dbReference type="DNASU" id="55111"/>
<dbReference type="Ensembl" id="ENST00000326631.7">
    <property type="protein sequence ID" value="ENSP00000318075.2"/>
    <property type="gene ID" value="ENSG00000104886.12"/>
</dbReference>
<dbReference type="Ensembl" id="ENST00000589097.6">
    <property type="protein sequence ID" value="ENSP00000465391.1"/>
    <property type="gene ID" value="ENSG00000104886.12"/>
</dbReference>
<dbReference type="GeneID" id="55111"/>
<dbReference type="KEGG" id="hsa:55111"/>
<dbReference type="MANE-Select" id="ENST00000326631.7">
    <property type="protein sequence ID" value="ENSP00000318075.2"/>
    <property type="RefSeq nucleotide sequence ID" value="NM_018049.3"/>
    <property type="RefSeq protein sequence ID" value="NP_060519.1"/>
</dbReference>
<dbReference type="UCSC" id="uc002lvf.2">
    <property type="organism name" value="human"/>
</dbReference>
<dbReference type="AGR" id="HGNC:18211"/>
<dbReference type="CTD" id="55111"/>
<dbReference type="DisGeNET" id="55111"/>
<dbReference type="GeneCards" id="PLEKHJ1"/>
<dbReference type="HGNC" id="HGNC:18211">
    <property type="gene designation" value="PLEKHJ1"/>
</dbReference>
<dbReference type="HPA" id="ENSG00000104886">
    <property type="expression patterns" value="Low tissue specificity"/>
</dbReference>
<dbReference type="MIM" id="617834">
    <property type="type" value="gene"/>
</dbReference>
<dbReference type="neXtProt" id="NX_Q9NW61"/>
<dbReference type="PharmGKB" id="PA134936152"/>
<dbReference type="VEuPathDB" id="HostDB:ENSG00000104886"/>
<dbReference type="eggNOG" id="KOG0017">
    <property type="taxonomic scope" value="Eukaryota"/>
</dbReference>
<dbReference type="GeneTree" id="ENSGT00390000005235"/>
<dbReference type="HOGENOM" id="CLU_141382_0_0_1"/>
<dbReference type="InParanoid" id="Q9NW61"/>
<dbReference type="OMA" id="EEQCKEW"/>
<dbReference type="OrthoDB" id="9835517at2759"/>
<dbReference type="PAN-GO" id="Q9NW61">
    <property type="GO annotations" value="6 GO annotations based on evolutionary models"/>
</dbReference>
<dbReference type="PhylomeDB" id="Q9NW61"/>
<dbReference type="PathwayCommons" id="Q9NW61"/>
<dbReference type="SignaLink" id="Q9NW61"/>
<dbReference type="BioGRID-ORCS" id="55111">
    <property type="hits" value="33 hits in 1154 CRISPR screens"/>
</dbReference>
<dbReference type="ChiTaRS" id="PLEKHJ1">
    <property type="organism name" value="human"/>
</dbReference>
<dbReference type="GenomeRNAi" id="55111"/>
<dbReference type="Pharos" id="Q9NW61">
    <property type="development level" value="Tdark"/>
</dbReference>
<dbReference type="PRO" id="PR:Q9NW61"/>
<dbReference type="Proteomes" id="UP000005640">
    <property type="component" value="Chromosome 19"/>
</dbReference>
<dbReference type="RNAct" id="Q9NW61">
    <property type="molecule type" value="protein"/>
</dbReference>
<dbReference type="Bgee" id="ENSG00000104886">
    <property type="expression patterns" value="Expressed in mucosa of transverse colon and 98 other cell types or tissues"/>
</dbReference>
<dbReference type="ExpressionAtlas" id="Q9NW61">
    <property type="expression patterns" value="baseline and differential"/>
</dbReference>
<dbReference type="GO" id="GO:0005829">
    <property type="term" value="C:cytosol"/>
    <property type="evidence" value="ECO:0007669"/>
    <property type="project" value="GOC"/>
</dbReference>
<dbReference type="GO" id="GO:0005769">
    <property type="term" value="C:early endosome"/>
    <property type="evidence" value="ECO:0000318"/>
    <property type="project" value="GO_Central"/>
</dbReference>
<dbReference type="GO" id="GO:0055037">
    <property type="term" value="C:recycling endosome"/>
    <property type="evidence" value="ECO:0000318"/>
    <property type="project" value="GO_Central"/>
</dbReference>
<dbReference type="GO" id="GO:0005802">
    <property type="term" value="C:trans-Golgi network"/>
    <property type="evidence" value="ECO:0000318"/>
    <property type="project" value="GO_Central"/>
</dbReference>
<dbReference type="GO" id="GO:0007032">
    <property type="term" value="P:endosome organization"/>
    <property type="evidence" value="ECO:0000318"/>
    <property type="project" value="GO_Central"/>
</dbReference>
<dbReference type="GO" id="GO:0001881">
    <property type="term" value="P:receptor recycling"/>
    <property type="evidence" value="ECO:0000318"/>
    <property type="project" value="GO_Central"/>
</dbReference>
<dbReference type="GO" id="GO:0042147">
    <property type="term" value="P:retrograde transport, endosome to Golgi"/>
    <property type="evidence" value="ECO:0000318"/>
    <property type="project" value="GO_Central"/>
</dbReference>
<dbReference type="CDD" id="cd13258">
    <property type="entry name" value="PH_PLEKHJ1"/>
    <property type="match status" value="1"/>
</dbReference>
<dbReference type="FunFam" id="2.30.29.30:FF:000300">
    <property type="entry name" value="pleckstrin homology domain-containing family J member 1"/>
    <property type="match status" value="1"/>
</dbReference>
<dbReference type="Gene3D" id="2.30.29.30">
    <property type="entry name" value="Pleckstrin-homology domain (PH domain)/Phosphotyrosine-binding domain (PTB)"/>
    <property type="match status" value="1"/>
</dbReference>
<dbReference type="InterPro" id="IPR045188">
    <property type="entry name" value="Boi1/Boi2-like"/>
</dbReference>
<dbReference type="InterPro" id="IPR011993">
    <property type="entry name" value="PH-like_dom_sf"/>
</dbReference>
<dbReference type="InterPro" id="IPR001849">
    <property type="entry name" value="PH_domain"/>
</dbReference>
<dbReference type="PANTHER" id="PTHR22902:SF9">
    <property type="entry name" value="PLECKSTRIN HOMOLOGY DOMAIN-CONTAINING FAMILY J MEMBER 1"/>
    <property type="match status" value="1"/>
</dbReference>
<dbReference type="PANTHER" id="PTHR22902">
    <property type="entry name" value="SESQUIPEDALIAN"/>
    <property type="match status" value="1"/>
</dbReference>
<dbReference type="Pfam" id="PF00169">
    <property type="entry name" value="PH"/>
    <property type="match status" value="1"/>
</dbReference>
<dbReference type="SMART" id="SM00233">
    <property type="entry name" value="PH"/>
    <property type="match status" value="1"/>
</dbReference>
<dbReference type="SUPFAM" id="SSF50729">
    <property type="entry name" value="PH domain-like"/>
    <property type="match status" value="1"/>
</dbReference>
<dbReference type="PROSITE" id="PS50003">
    <property type="entry name" value="PH_DOMAIN"/>
    <property type="match status" value="1"/>
</dbReference>
<feature type="chain" id="PRO_0000309230" description="Pleckstrin homology domain-containing family J member 1">
    <location>
        <begin position="1"/>
        <end position="149"/>
    </location>
</feature>
<feature type="domain" description="PH" evidence="1">
    <location>
        <begin position="15"/>
        <end position="108"/>
    </location>
</feature>
<comment type="interaction">
    <interactant intactId="EBI-1057560">
        <id>Q9NW61</id>
    </interactant>
    <interactant intactId="EBI-1052105">
        <id>Q14657</id>
        <label>LAGE3</label>
    </interactant>
    <organismsDiffer>false</organismsDiffer>
    <experiments>3</experiments>
</comment>
<comment type="interaction">
    <interactant intactId="EBI-1057560">
        <id>Q9NW61</id>
    </interactant>
    <interactant intactId="EBI-741158">
        <id>Q96HA8</id>
        <label>NTAQ1</label>
    </interactant>
    <organismsDiffer>false</organismsDiffer>
    <experiments>3</experiments>
</comment>
<comment type="interaction">
    <interactant intactId="EBI-1057560">
        <id>Q9NW61</id>
    </interactant>
    <interactant intactId="EBI-7310488">
        <id>Q8N4B1</id>
        <label>PHETA1</label>
    </interactant>
    <organismsDiffer>false</organismsDiffer>
    <experiments>5</experiments>
</comment>
<comment type="interaction">
    <interactant intactId="EBI-1057560">
        <id>Q9NW61</id>
    </interactant>
    <interactant intactId="EBI-14131832">
        <id>Q8N4B1-4</id>
        <label>PHETA1</label>
    </interactant>
    <organismsDiffer>false</organismsDiffer>
    <experiments>3</experiments>
</comment>
<comment type="interaction">
    <interactant intactId="EBI-1057560">
        <id>Q9NW61</id>
    </interactant>
    <interactant intactId="EBI-11081747">
        <id>Q6ICB4</id>
        <label>PHETA2</label>
    </interactant>
    <organismsDiffer>false</organismsDiffer>
    <experiments>6</experiments>
</comment>
<comment type="interaction">
    <interactant intactId="EBI-1057560">
        <id>Q9NW61</id>
    </interactant>
    <interactant intactId="EBI-10232538">
        <id>Q8WWB5</id>
        <label>PIH1D2</label>
    </interactant>
    <organismsDiffer>false</organismsDiffer>
    <experiments>3</experiments>
</comment>
<comment type="tissue specificity">
    <text evidence="2">Expressed in testis and liver.</text>
</comment>
<accession>Q9NW61</accession>
<accession>B3KUQ9</accession>
<accession>D6W604</accession>